<organism>
    <name type="scientific">Borreliella afzelii (strain PKo)</name>
    <name type="common">Borrelia afzelii</name>
    <dbReference type="NCBI Taxonomy" id="390236"/>
    <lineage>
        <taxon>Bacteria</taxon>
        <taxon>Pseudomonadati</taxon>
        <taxon>Spirochaetota</taxon>
        <taxon>Spirochaetia</taxon>
        <taxon>Spirochaetales</taxon>
        <taxon>Borreliaceae</taxon>
        <taxon>Borreliella</taxon>
    </lineage>
</organism>
<feature type="chain" id="PRO_1000001153" description="Ribosome maturation factor RimM">
    <location>
        <begin position="1"/>
        <end position="166"/>
    </location>
</feature>
<feature type="domain" description="PRC barrel" evidence="1">
    <location>
        <begin position="94"/>
        <end position="165"/>
    </location>
</feature>
<dbReference type="EMBL" id="CP000395">
    <property type="protein sequence ID" value="ABH01971.1"/>
    <property type="molecule type" value="Genomic_DNA"/>
</dbReference>
<dbReference type="EMBL" id="CP002933">
    <property type="protein sequence ID" value="AEL69917.1"/>
    <property type="molecule type" value="Genomic_DNA"/>
</dbReference>
<dbReference type="RefSeq" id="WP_004789984.1">
    <property type="nucleotide sequence ID" value="NZ_CP160066.1"/>
</dbReference>
<dbReference type="SMR" id="Q0SMF7"/>
<dbReference type="STRING" id="29518.BLA32_00750"/>
<dbReference type="KEGG" id="baf:BAPKO_0741"/>
<dbReference type="KEGG" id="bafz:BafPKo_0722"/>
<dbReference type="PATRIC" id="fig|390236.22.peg.689"/>
<dbReference type="eggNOG" id="COG0806">
    <property type="taxonomic scope" value="Bacteria"/>
</dbReference>
<dbReference type="HOGENOM" id="CLU_077636_3_2_12"/>
<dbReference type="OrthoDB" id="9810331at2"/>
<dbReference type="Proteomes" id="UP000005216">
    <property type="component" value="Chromosome"/>
</dbReference>
<dbReference type="GO" id="GO:0005737">
    <property type="term" value="C:cytoplasm"/>
    <property type="evidence" value="ECO:0007669"/>
    <property type="project" value="UniProtKB-SubCell"/>
</dbReference>
<dbReference type="GO" id="GO:0005840">
    <property type="term" value="C:ribosome"/>
    <property type="evidence" value="ECO:0007669"/>
    <property type="project" value="InterPro"/>
</dbReference>
<dbReference type="GO" id="GO:0043022">
    <property type="term" value="F:ribosome binding"/>
    <property type="evidence" value="ECO:0007669"/>
    <property type="project" value="InterPro"/>
</dbReference>
<dbReference type="GO" id="GO:0042274">
    <property type="term" value="P:ribosomal small subunit biogenesis"/>
    <property type="evidence" value="ECO:0007669"/>
    <property type="project" value="UniProtKB-UniRule"/>
</dbReference>
<dbReference type="GO" id="GO:0006364">
    <property type="term" value="P:rRNA processing"/>
    <property type="evidence" value="ECO:0007669"/>
    <property type="project" value="UniProtKB-UniRule"/>
</dbReference>
<dbReference type="Gene3D" id="2.30.30.240">
    <property type="entry name" value="PRC-barrel domain"/>
    <property type="match status" value="1"/>
</dbReference>
<dbReference type="Gene3D" id="2.40.30.60">
    <property type="entry name" value="RimM"/>
    <property type="match status" value="1"/>
</dbReference>
<dbReference type="HAMAP" id="MF_00014">
    <property type="entry name" value="Ribosome_mat_RimM"/>
    <property type="match status" value="1"/>
</dbReference>
<dbReference type="InterPro" id="IPR011033">
    <property type="entry name" value="PRC_barrel-like_sf"/>
</dbReference>
<dbReference type="InterPro" id="IPR056792">
    <property type="entry name" value="PRC_RimM"/>
</dbReference>
<dbReference type="InterPro" id="IPR011961">
    <property type="entry name" value="RimM"/>
</dbReference>
<dbReference type="InterPro" id="IPR002676">
    <property type="entry name" value="RimM_N"/>
</dbReference>
<dbReference type="InterPro" id="IPR036976">
    <property type="entry name" value="RimM_N_sf"/>
</dbReference>
<dbReference type="InterPro" id="IPR009000">
    <property type="entry name" value="Transl_B-barrel_sf"/>
</dbReference>
<dbReference type="NCBIfam" id="TIGR02273">
    <property type="entry name" value="16S_RimM"/>
    <property type="match status" value="1"/>
</dbReference>
<dbReference type="NCBIfam" id="NF011188">
    <property type="entry name" value="PRK14594.1"/>
    <property type="match status" value="1"/>
</dbReference>
<dbReference type="PANTHER" id="PTHR33692">
    <property type="entry name" value="RIBOSOME MATURATION FACTOR RIMM"/>
    <property type="match status" value="1"/>
</dbReference>
<dbReference type="PANTHER" id="PTHR33692:SF1">
    <property type="entry name" value="RIBOSOME MATURATION FACTOR RIMM"/>
    <property type="match status" value="1"/>
</dbReference>
<dbReference type="Pfam" id="PF24986">
    <property type="entry name" value="PRC_RimM"/>
    <property type="match status" value="1"/>
</dbReference>
<dbReference type="Pfam" id="PF01782">
    <property type="entry name" value="RimM"/>
    <property type="match status" value="1"/>
</dbReference>
<dbReference type="SUPFAM" id="SSF50346">
    <property type="entry name" value="PRC-barrel domain"/>
    <property type="match status" value="1"/>
</dbReference>
<dbReference type="SUPFAM" id="SSF50447">
    <property type="entry name" value="Translation proteins"/>
    <property type="match status" value="1"/>
</dbReference>
<protein>
    <recommendedName>
        <fullName evidence="1">Ribosome maturation factor RimM</fullName>
    </recommendedName>
</protein>
<gene>
    <name evidence="1" type="primary">rimM</name>
    <name type="ordered locus">BAPKO_0741</name>
    <name type="ordered locus">BafPKo_0722</name>
</gene>
<comment type="function">
    <text evidence="1">An accessory protein needed during the final step in the assembly of 30S ribosomal subunit, possibly for assembly of the head region. Essential for efficient processing of 16S rRNA. May be needed both before and after RbfA during the maturation of 16S rRNA. It has affinity for free ribosomal 30S subunits but not for 70S ribosomes.</text>
</comment>
<comment type="subunit">
    <text evidence="1">Binds ribosomal protein uS19.</text>
</comment>
<comment type="subcellular location">
    <subcellularLocation>
        <location evidence="1">Cytoplasm</location>
    </subcellularLocation>
</comment>
<comment type="domain">
    <text evidence="1">The PRC barrel domain binds ribosomal protein uS19.</text>
</comment>
<comment type="similarity">
    <text evidence="1">Belongs to the RimM family.</text>
</comment>
<sequence length="166" mass="18820">MFIKGVILSSYGVNGYARIKSISNNFCDFINLKNNKVLLKKSNGFAIEVKVIDVNIKSNSLFLKFEGIDAPESVKPLIGFELWVDDSLASSLKEGEYYLGKLIGYTIVNDNRKLGEVVAFFEYLNNVFLEVKVGIKFFFIPFLSIYIGNIDAREKTIELKVLDLLR</sequence>
<reference key="1">
    <citation type="journal article" date="2006" name="BMC Genomics">
        <title>Comparative genome analysis: selection pressure on the Borrelia vls cassettes is essential for infectivity.</title>
        <authorList>
            <person name="Gloeckner G."/>
            <person name="Schulte-Spechtel U."/>
            <person name="Schilhabel M."/>
            <person name="Felder M."/>
            <person name="Suehnel J."/>
            <person name="Wilske B."/>
            <person name="Platzer M."/>
        </authorList>
    </citation>
    <scope>NUCLEOTIDE SEQUENCE [LARGE SCALE GENOMIC DNA]</scope>
    <source>
        <strain>PKo</strain>
    </source>
</reference>
<reference key="2">
    <citation type="journal article" date="2011" name="J. Bacteriol.">
        <title>Whole-genome sequences of two Borrelia afzelii and two Borrelia garinii Lyme disease agent isolates.</title>
        <authorList>
            <person name="Casjens S.R."/>
            <person name="Mongodin E.F."/>
            <person name="Qiu W.G."/>
            <person name="Dunn J.J."/>
            <person name="Luft B.J."/>
            <person name="Fraser-Liggett C.M."/>
            <person name="Schutzer S.E."/>
        </authorList>
    </citation>
    <scope>NUCLEOTIDE SEQUENCE [LARGE SCALE GENOMIC DNA]</scope>
    <source>
        <strain>PKo</strain>
    </source>
</reference>
<accession>Q0SMF7</accession>
<accession>G0IRF1</accession>
<evidence type="ECO:0000255" key="1">
    <source>
        <dbReference type="HAMAP-Rule" id="MF_00014"/>
    </source>
</evidence>
<name>RIMM_BORAP</name>
<proteinExistence type="inferred from homology"/>
<keyword id="KW-0143">Chaperone</keyword>
<keyword id="KW-0963">Cytoplasm</keyword>
<keyword id="KW-0690">Ribosome biogenesis</keyword>
<keyword id="KW-0698">rRNA processing</keyword>